<feature type="initiator methionine" description="Removed" evidence="1">
    <location>
        <position position="1"/>
    </location>
</feature>
<feature type="chain" id="PRO_0000294401" description="Malate dehydrogenase">
    <location>
        <begin position="2"/>
        <end position="327"/>
    </location>
</feature>
<feature type="active site" description="Proton acceptor" evidence="2">
    <location>
        <position position="188"/>
    </location>
</feature>
<feature type="binding site" evidence="2">
    <location>
        <begin position="12"/>
        <end position="18"/>
    </location>
    <ligand>
        <name>NAD(+)</name>
        <dbReference type="ChEBI" id="CHEBI:57540"/>
    </ligand>
</feature>
<feature type="binding site" evidence="2">
    <location>
        <position position="93"/>
    </location>
    <ligand>
        <name>substrate</name>
    </ligand>
</feature>
<feature type="binding site" evidence="2">
    <location>
        <position position="99"/>
    </location>
    <ligand>
        <name>substrate</name>
    </ligand>
</feature>
<feature type="binding site" evidence="2">
    <location>
        <position position="106"/>
    </location>
    <ligand>
        <name>NAD(+)</name>
        <dbReference type="ChEBI" id="CHEBI:57540"/>
    </ligand>
</feature>
<feature type="binding site" evidence="2">
    <location>
        <position position="113"/>
    </location>
    <ligand>
        <name>NAD(+)</name>
        <dbReference type="ChEBI" id="CHEBI:57540"/>
    </ligand>
</feature>
<feature type="binding site" evidence="2">
    <location>
        <begin position="130"/>
        <end position="132"/>
    </location>
    <ligand>
        <name>NAD(+)</name>
        <dbReference type="ChEBI" id="CHEBI:57540"/>
    </ligand>
</feature>
<feature type="binding site" evidence="2">
    <location>
        <position position="132"/>
    </location>
    <ligand>
        <name>substrate</name>
    </ligand>
</feature>
<feature type="binding site" evidence="2">
    <location>
        <position position="163"/>
    </location>
    <ligand>
        <name>substrate</name>
    </ligand>
</feature>
<organism>
    <name type="scientific">Cupriavidus necator (strain ATCC 17699 / DSM 428 / KCTC 22496 / NCIMB 10442 / H16 / Stanier 337)</name>
    <name type="common">Ralstonia eutropha</name>
    <dbReference type="NCBI Taxonomy" id="381666"/>
    <lineage>
        <taxon>Bacteria</taxon>
        <taxon>Pseudomonadati</taxon>
        <taxon>Pseudomonadota</taxon>
        <taxon>Betaproteobacteria</taxon>
        <taxon>Burkholderiales</taxon>
        <taxon>Burkholderiaceae</taxon>
        <taxon>Cupriavidus</taxon>
    </lineage>
</organism>
<dbReference type="EC" id="1.1.1.37" evidence="2"/>
<dbReference type="EMBL" id="AM260479">
    <property type="protein sequence ID" value="CAJ93716.1"/>
    <property type="molecule type" value="Genomic_DNA"/>
</dbReference>
<dbReference type="RefSeq" id="WP_010814614.1">
    <property type="nucleotide sequence ID" value="NZ_CP039287.1"/>
</dbReference>
<dbReference type="SMR" id="Q0K8F5"/>
<dbReference type="STRING" id="381666.H16_A2634"/>
<dbReference type="KEGG" id="reh:H16_A2634"/>
<dbReference type="eggNOG" id="COG0039">
    <property type="taxonomic scope" value="Bacteria"/>
</dbReference>
<dbReference type="HOGENOM" id="CLU_040727_2_0_4"/>
<dbReference type="OrthoDB" id="9802969at2"/>
<dbReference type="Proteomes" id="UP000008210">
    <property type="component" value="Chromosome 1"/>
</dbReference>
<dbReference type="GO" id="GO:0030060">
    <property type="term" value="F:L-malate dehydrogenase (NAD+) activity"/>
    <property type="evidence" value="ECO:0007669"/>
    <property type="project" value="UniProtKB-UniRule"/>
</dbReference>
<dbReference type="GO" id="GO:0006108">
    <property type="term" value="P:malate metabolic process"/>
    <property type="evidence" value="ECO:0007669"/>
    <property type="project" value="InterPro"/>
</dbReference>
<dbReference type="GO" id="GO:0006099">
    <property type="term" value="P:tricarboxylic acid cycle"/>
    <property type="evidence" value="ECO:0007669"/>
    <property type="project" value="UniProtKB-UniRule"/>
</dbReference>
<dbReference type="CDD" id="cd01338">
    <property type="entry name" value="MDH_chloroplast-like"/>
    <property type="match status" value="1"/>
</dbReference>
<dbReference type="FunFam" id="3.40.50.720:FF:000010">
    <property type="entry name" value="Malate dehydrogenase"/>
    <property type="match status" value="1"/>
</dbReference>
<dbReference type="FunFam" id="3.90.110.10:FF:000002">
    <property type="entry name" value="Malate dehydrogenase"/>
    <property type="match status" value="1"/>
</dbReference>
<dbReference type="Gene3D" id="3.90.110.10">
    <property type="entry name" value="Lactate dehydrogenase/glycoside hydrolase, family 4, C-terminal"/>
    <property type="match status" value="1"/>
</dbReference>
<dbReference type="Gene3D" id="3.40.50.720">
    <property type="entry name" value="NAD(P)-binding Rossmann-like Domain"/>
    <property type="match status" value="1"/>
</dbReference>
<dbReference type="HAMAP" id="MF_01517">
    <property type="entry name" value="Malate_dehydrog_2"/>
    <property type="match status" value="1"/>
</dbReference>
<dbReference type="InterPro" id="IPR001557">
    <property type="entry name" value="L-lactate/malate_DH"/>
</dbReference>
<dbReference type="InterPro" id="IPR022383">
    <property type="entry name" value="Lactate/malate_DH_C"/>
</dbReference>
<dbReference type="InterPro" id="IPR001236">
    <property type="entry name" value="Lactate/malate_DH_N"/>
</dbReference>
<dbReference type="InterPro" id="IPR015955">
    <property type="entry name" value="Lactate_DH/Glyco_Ohase_4_C"/>
</dbReference>
<dbReference type="InterPro" id="IPR010945">
    <property type="entry name" value="Malate_DH_type2"/>
</dbReference>
<dbReference type="InterPro" id="IPR036291">
    <property type="entry name" value="NAD(P)-bd_dom_sf"/>
</dbReference>
<dbReference type="NCBIfam" id="TIGR01759">
    <property type="entry name" value="MalateDH-SF1"/>
    <property type="match status" value="1"/>
</dbReference>
<dbReference type="NCBIfam" id="NF003916">
    <property type="entry name" value="PRK05442.1"/>
    <property type="match status" value="1"/>
</dbReference>
<dbReference type="PANTHER" id="PTHR23382">
    <property type="entry name" value="MALATE DEHYDROGENASE"/>
    <property type="match status" value="1"/>
</dbReference>
<dbReference type="Pfam" id="PF02866">
    <property type="entry name" value="Ldh_1_C"/>
    <property type="match status" value="1"/>
</dbReference>
<dbReference type="Pfam" id="PF00056">
    <property type="entry name" value="Ldh_1_N"/>
    <property type="match status" value="1"/>
</dbReference>
<dbReference type="PIRSF" id="PIRSF000102">
    <property type="entry name" value="Lac_mal_DH"/>
    <property type="match status" value="1"/>
</dbReference>
<dbReference type="SUPFAM" id="SSF56327">
    <property type="entry name" value="LDH C-terminal domain-like"/>
    <property type="match status" value="1"/>
</dbReference>
<dbReference type="SUPFAM" id="SSF51735">
    <property type="entry name" value="NAD(P)-binding Rossmann-fold domains"/>
    <property type="match status" value="1"/>
</dbReference>
<keyword id="KW-0520">NAD</keyword>
<keyword id="KW-0560">Oxidoreductase</keyword>
<keyword id="KW-1185">Reference proteome</keyword>
<keyword id="KW-0816">Tricarboxylic acid cycle</keyword>
<sequence>MAKAPMRVAVTGAAGQIGYSLLFRIANGDMLGKDQPVILQLLDLPQAQQAVKGVVMELEDCAFPLLAGVVITDDPKVAFKDADVALLVGARPRSKGMERKDLLEANAQIFTVQGKALDEVASRNVKVLVVGNPANTNAYIAMKSAPNLPRENFTAMLRLDHNRALSQIAAKTGKPVSSIEKLFVWGNHSPTMYADYRYATVDGKSVKDLINDPVWNNDVFLPTVGKRGAAIIEARGLSSAASAANAAIDHVRDWVLGTNGKVVTMGIPSNGEYGIPADTMFGYPVTTANGKYEIVKGLEIDAYSQEKINITLNELEEEKAGVQHLLG</sequence>
<comment type="function">
    <text evidence="2">Catalyzes the reversible oxidation of malate to oxaloacetate.</text>
</comment>
<comment type="catalytic activity">
    <reaction evidence="2">
        <text>(S)-malate + NAD(+) = oxaloacetate + NADH + H(+)</text>
        <dbReference type="Rhea" id="RHEA:21432"/>
        <dbReference type="ChEBI" id="CHEBI:15378"/>
        <dbReference type="ChEBI" id="CHEBI:15589"/>
        <dbReference type="ChEBI" id="CHEBI:16452"/>
        <dbReference type="ChEBI" id="CHEBI:57540"/>
        <dbReference type="ChEBI" id="CHEBI:57945"/>
        <dbReference type="EC" id="1.1.1.37"/>
    </reaction>
</comment>
<comment type="similarity">
    <text evidence="2">Belongs to the LDH/MDH superfamily. MDH type 2 family.</text>
</comment>
<evidence type="ECO:0000250" key="1"/>
<evidence type="ECO:0000255" key="2">
    <source>
        <dbReference type="HAMAP-Rule" id="MF_01517"/>
    </source>
</evidence>
<name>MDH_CUPNH</name>
<proteinExistence type="inferred from homology"/>
<accession>Q0K8F5</accession>
<gene>
    <name evidence="2" type="primary">mdh</name>
    <name type="ordered locus">H16_A2634</name>
</gene>
<protein>
    <recommendedName>
        <fullName evidence="2">Malate dehydrogenase</fullName>
        <ecNumber evidence="2">1.1.1.37</ecNumber>
    </recommendedName>
</protein>
<reference key="1">
    <citation type="journal article" date="2006" name="Nat. Biotechnol.">
        <title>Genome sequence of the bioplastic-producing 'Knallgas' bacterium Ralstonia eutropha H16.</title>
        <authorList>
            <person name="Pohlmann A."/>
            <person name="Fricke W.F."/>
            <person name="Reinecke F."/>
            <person name="Kusian B."/>
            <person name="Liesegang H."/>
            <person name="Cramm R."/>
            <person name="Eitinger T."/>
            <person name="Ewering C."/>
            <person name="Poetter M."/>
            <person name="Schwartz E."/>
            <person name="Strittmatter A."/>
            <person name="Voss I."/>
            <person name="Gottschalk G."/>
            <person name="Steinbuechel A."/>
            <person name="Friedrich B."/>
            <person name="Bowien B."/>
        </authorList>
    </citation>
    <scope>NUCLEOTIDE SEQUENCE [LARGE SCALE GENOMIC DNA]</scope>
    <source>
        <strain>ATCC 17699 / DSM 428 / KCTC 22496 / NCIMB 10442 / H16 / Stanier 337</strain>
    </source>
</reference>